<proteinExistence type="inferred from homology"/>
<dbReference type="EC" id="5.4.99.62" evidence="1"/>
<dbReference type="EMBL" id="BA000030">
    <property type="protein sequence ID" value="BAC73028.1"/>
    <property type="molecule type" value="Genomic_DNA"/>
</dbReference>
<dbReference type="RefSeq" id="WP_010986720.1">
    <property type="nucleotide sequence ID" value="NZ_JZJK01000072.1"/>
</dbReference>
<dbReference type="SMR" id="Q82CM8"/>
<dbReference type="GeneID" id="41542407"/>
<dbReference type="KEGG" id="sma:SAVERM_5316"/>
<dbReference type="eggNOG" id="COG1869">
    <property type="taxonomic scope" value="Bacteria"/>
</dbReference>
<dbReference type="HOGENOM" id="CLU_135498_0_0_11"/>
<dbReference type="OrthoDB" id="9805009at2"/>
<dbReference type="UniPathway" id="UPA00916">
    <property type="reaction ID" value="UER00888"/>
</dbReference>
<dbReference type="Proteomes" id="UP000000428">
    <property type="component" value="Chromosome"/>
</dbReference>
<dbReference type="GO" id="GO:0005829">
    <property type="term" value="C:cytosol"/>
    <property type="evidence" value="ECO:0007669"/>
    <property type="project" value="TreeGrafter"/>
</dbReference>
<dbReference type="GO" id="GO:0062193">
    <property type="term" value="F:D-ribose pyranase activity"/>
    <property type="evidence" value="ECO:0007669"/>
    <property type="project" value="UniProtKB-EC"/>
</dbReference>
<dbReference type="GO" id="GO:0016872">
    <property type="term" value="F:intramolecular lyase activity"/>
    <property type="evidence" value="ECO:0007669"/>
    <property type="project" value="UniProtKB-UniRule"/>
</dbReference>
<dbReference type="GO" id="GO:0048029">
    <property type="term" value="F:monosaccharide binding"/>
    <property type="evidence" value="ECO:0007669"/>
    <property type="project" value="InterPro"/>
</dbReference>
<dbReference type="GO" id="GO:0019303">
    <property type="term" value="P:D-ribose catabolic process"/>
    <property type="evidence" value="ECO:0007669"/>
    <property type="project" value="UniProtKB-UniRule"/>
</dbReference>
<dbReference type="FunFam" id="3.40.1650.10:FF:000004">
    <property type="entry name" value="D-ribose pyranase"/>
    <property type="match status" value="1"/>
</dbReference>
<dbReference type="Gene3D" id="3.40.1650.10">
    <property type="entry name" value="RbsD-like domain"/>
    <property type="match status" value="1"/>
</dbReference>
<dbReference type="HAMAP" id="MF_01661">
    <property type="entry name" value="D_rib_pyranase"/>
    <property type="match status" value="1"/>
</dbReference>
<dbReference type="InterPro" id="IPR023064">
    <property type="entry name" value="D-ribose_pyranase"/>
</dbReference>
<dbReference type="InterPro" id="IPR023750">
    <property type="entry name" value="RbsD-like_sf"/>
</dbReference>
<dbReference type="InterPro" id="IPR007721">
    <property type="entry name" value="RbsD_FucU"/>
</dbReference>
<dbReference type="NCBIfam" id="NF008761">
    <property type="entry name" value="PRK11797.1"/>
    <property type="match status" value="1"/>
</dbReference>
<dbReference type="PANTHER" id="PTHR37831">
    <property type="entry name" value="D-RIBOSE PYRANASE"/>
    <property type="match status" value="1"/>
</dbReference>
<dbReference type="PANTHER" id="PTHR37831:SF1">
    <property type="entry name" value="D-RIBOSE PYRANASE"/>
    <property type="match status" value="1"/>
</dbReference>
<dbReference type="Pfam" id="PF05025">
    <property type="entry name" value="RbsD_FucU"/>
    <property type="match status" value="1"/>
</dbReference>
<dbReference type="SUPFAM" id="SSF102546">
    <property type="entry name" value="RbsD-like"/>
    <property type="match status" value="1"/>
</dbReference>
<name>RBSD_STRAW</name>
<accession>Q82CM8</accession>
<evidence type="ECO:0000255" key="1">
    <source>
        <dbReference type="HAMAP-Rule" id="MF_01661"/>
    </source>
</evidence>
<sequence length="129" mass="13629">MKKAGILNRHLAGALAELGHGHGVLVCDAGMPIPVGPRVVDLAFRAGVPSFAEVLDGLLDELVVEGATAAREVREANPGATALLQTRFPALELVPHEELKSLSANARLIVRTGEARPYANVLLRCGVFF</sequence>
<feature type="chain" id="PRO_0000346282" description="D-ribose pyranase">
    <location>
        <begin position="1"/>
        <end position="129"/>
    </location>
</feature>
<feature type="active site" description="Proton donor" evidence="1">
    <location>
        <position position="20"/>
    </location>
</feature>
<feature type="binding site" evidence="1">
    <location>
        <position position="28"/>
    </location>
    <ligand>
        <name>substrate</name>
    </ligand>
</feature>
<feature type="binding site" evidence="1">
    <location>
        <position position="96"/>
    </location>
    <ligand>
        <name>substrate</name>
    </ligand>
</feature>
<feature type="binding site" evidence="1">
    <location>
        <begin position="118"/>
        <end position="120"/>
    </location>
    <ligand>
        <name>substrate</name>
    </ligand>
</feature>
<comment type="function">
    <text evidence="1">Catalyzes the interconversion of beta-pyran and beta-furan forms of D-ribose.</text>
</comment>
<comment type="catalytic activity">
    <reaction evidence="1">
        <text>beta-D-ribopyranose = beta-D-ribofuranose</text>
        <dbReference type="Rhea" id="RHEA:25432"/>
        <dbReference type="ChEBI" id="CHEBI:27476"/>
        <dbReference type="ChEBI" id="CHEBI:47002"/>
        <dbReference type="EC" id="5.4.99.62"/>
    </reaction>
</comment>
<comment type="pathway">
    <text evidence="1">Carbohydrate metabolism; D-ribose degradation; D-ribose 5-phosphate from beta-D-ribopyranose: step 1/2.</text>
</comment>
<comment type="subunit">
    <text evidence="1">Homodecamer.</text>
</comment>
<comment type="subcellular location">
    <subcellularLocation>
        <location evidence="1">Cytoplasm</location>
    </subcellularLocation>
</comment>
<comment type="similarity">
    <text evidence="1">Belongs to the RbsD / FucU family. RbsD subfamily.</text>
</comment>
<gene>
    <name evidence="1" type="primary">rbsD</name>
    <name type="ordered locus">SAV_5316</name>
</gene>
<protein>
    <recommendedName>
        <fullName evidence="1">D-ribose pyranase</fullName>
        <ecNumber evidence="1">5.4.99.62</ecNumber>
    </recommendedName>
</protein>
<reference key="1">
    <citation type="journal article" date="2003" name="Nat. Biotechnol.">
        <title>Complete genome sequence and comparative analysis of the industrial microorganism Streptomyces avermitilis.</title>
        <authorList>
            <person name="Ikeda H."/>
            <person name="Ishikawa J."/>
            <person name="Hanamoto A."/>
            <person name="Shinose M."/>
            <person name="Kikuchi H."/>
            <person name="Shiba T."/>
            <person name="Sakaki Y."/>
            <person name="Hattori M."/>
            <person name="Omura S."/>
        </authorList>
    </citation>
    <scope>NUCLEOTIDE SEQUENCE [LARGE SCALE GENOMIC DNA]</scope>
    <source>
        <strain>ATCC 31267 / DSM 46492 / JCM 5070 / NBRC 14893 / NCIMB 12804 / NRRL 8165 / MA-4680</strain>
    </source>
</reference>
<reference key="2">
    <citation type="journal article" date="2001" name="Proc. Natl. Acad. Sci. U.S.A.">
        <title>Genome sequence of an industrial microorganism Streptomyces avermitilis: deducing the ability of producing secondary metabolites.</title>
        <authorList>
            <person name="Omura S."/>
            <person name="Ikeda H."/>
            <person name="Ishikawa J."/>
            <person name="Hanamoto A."/>
            <person name="Takahashi C."/>
            <person name="Shinose M."/>
            <person name="Takahashi Y."/>
            <person name="Horikawa H."/>
            <person name="Nakazawa H."/>
            <person name="Osonoe T."/>
            <person name="Kikuchi H."/>
            <person name="Shiba T."/>
            <person name="Sakaki Y."/>
            <person name="Hattori M."/>
        </authorList>
    </citation>
    <scope>NUCLEOTIDE SEQUENCE [LARGE SCALE GENOMIC DNA]</scope>
    <source>
        <strain>ATCC 31267 / DSM 46492 / JCM 5070 / NBRC 14893 / NCIMB 12804 / NRRL 8165 / MA-4680</strain>
    </source>
</reference>
<keyword id="KW-0119">Carbohydrate metabolism</keyword>
<keyword id="KW-0963">Cytoplasm</keyword>
<keyword id="KW-0413">Isomerase</keyword>
<keyword id="KW-1185">Reference proteome</keyword>
<organism>
    <name type="scientific">Streptomyces avermitilis (strain ATCC 31267 / DSM 46492 / JCM 5070 / NBRC 14893 / NCIMB 12804 / NRRL 8165 / MA-4680)</name>
    <dbReference type="NCBI Taxonomy" id="227882"/>
    <lineage>
        <taxon>Bacteria</taxon>
        <taxon>Bacillati</taxon>
        <taxon>Actinomycetota</taxon>
        <taxon>Actinomycetes</taxon>
        <taxon>Kitasatosporales</taxon>
        <taxon>Streptomycetaceae</taxon>
        <taxon>Streptomyces</taxon>
    </lineage>
</organism>